<comment type="function">
    <text evidence="1 2">Assembles to form an icosahedral capsid with a T=13 symmetry. Drives the penetration of the inner capsid (core) into the cytoplasm.</text>
</comment>
<comment type="subunit">
    <text>Homotrimer.</text>
</comment>
<comment type="subcellular location">
    <subcellularLocation>
        <location>Virion</location>
    </subcellularLocation>
    <text>Outer capsid protein (600 copies).</text>
</comment>
<sequence>MLLPVVARAAVPAIESAIAATPGLVSRIAAAIGSKVSPSAILAAVKSNPVVAGLTLAQIGSTGYDAYQQLLENHPEVAEMLKDLSFKADEIQPDFIGNLGQYREELELVEDAARFVGGMSNLIRLRQALELDIKYYGLKMQLNDMGYRS</sequence>
<evidence type="ECO:0000269" key="1">
    <source>
    </source>
</evidence>
<evidence type="ECO:0000269" key="2">
    <source>
    </source>
</evidence>
<evidence type="ECO:0007829" key="3">
    <source>
        <dbReference type="PDB" id="6HY0"/>
    </source>
</evidence>
<keyword id="KW-0002">3D-structure</keyword>
<keyword id="KW-0167">Capsid protein</keyword>
<keyword id="KW-1152">Outer capsid protein</keyword>
<keyword id="KW-1185">Reference proteome</keyword>
<keyword id="KW-1146">T=13 icosahedral capsid protein</keyword>
<keyword id="KW-0946">Virion</keyword>
<proteinExistence type="evidence at protein level"/>
<dbReference type="EMBL" id="M12921">
    <property type="protein sequence ID" value="AAA32358.1"/>
    <property type="molecule type" value="Genomic_RNA"/>
</dbReference>
<dbReference type="PIR" id="A23368">
    <property type="entry name" value="VHBPF6"/>
</dbReference>
<dbReference type="RefSeq" id="NP_620340.1">
    <property type="nucleotide sequence ID" value="NC_003714.1"/>
</dbReference>
<dbReference type="PDB" id="5MUU">
    <property type="method" value="EM"/>
    <property type="resolution" value="4.00 A"/>
    <property type="chains" value="D/E/F/G/H/I/J/K/L/M=1-149"/>
</dbReference>
<dbReference type="PDB" id="6HY0">
    <property type="method" value="EM"/>
    <property type="resolution" value="3.50 A"/>
    <property type="chains" value="D/E/F/G/H/I/J/K/L/M=1-149"/>
</dbReference>
<dbReference type="PDBsum" id="5MUU"/>
<dbReference type="PDBsum" id="6HY0"/>
<dbReference type="EMDB" id="EMD-0299"/>
<dbReference type="EMDB" id="EMD-3571"/>
<dbReference type="SMR" id="P07579"/>
<dbReference type="DIP" id="DIP-29116N"/>
<dbReference type="IntAct" id="P07579">
    <property type="interactions" value="1"/>
</dbReference>
<dbReference type="KEGG" id="vg:956430"/>
<dbReference type="Proteomes" id="UP000002610">
    <property type="component" value="Genome"/>
</dbReference>
<dbReference type="GO" id="GO:0039621">
    <property type="term" value="C:T=13 icosahedral viral capsid"/>
    <property type="evidence" value="ECO:0007669"/>
    <property type="project" value="UniProtKB-KW"/>
</dbReference>
<dbReference type="GO" id="GO:0039624">
    <property type="term" value="C:viral outer capsid"/>
    <property type="evidence" value="ECO:0007669"/>
    <property type="project" value="UniProtKB-KW"/>
</dbReference>
<reference key="1">
    <citation type="journal article" date="1986" name="J. Virol.">
        <title>Nucleotide sequence of the small double-stranded RNA segment of bacteriophage phi 6: novel mechanism of natural translational control.</title>
        <authorList>
            <person name="McGraw T."/>
            <person name="Mindich L."/>
            <person name="Frangione B."/>
        </authorList>
    </citation>
    <scope>NUCLEOTIDE SEQUENCE [GENOMIC RNA]</scope>
</reference>
<reference key="2">
    <citation type="journal article" date="1999" name="J. Cell Biol.">
        <title>A novel virus-host cell membrane interaction. Membrane voltage-dependent endocytic-like entry of bacteriophage straight phi6 nucleocapsid.</title>
        <authorList>
            <person name="Poranen M.M."/>
            <person name="Daugelavicius R."/>
            <person name="Ojala P.M."/>
            <person name="Hess M.W."/>
            <person name="Bamford D.H."/>
        </authorList>
    </citation>
    <scope>FUNCTION</scope>
</reference>
<reference key="3">
    <citation type="journal article" date="2007" name="Structure">
        <title>Electron cryomicroscopy comparison of the architectures of the enveloped bacteriophages phi6 and phi8.</title>
        <authorList>
            <person name="Jaalinoja H.T."/>
            <person name="Huiskonen J.T."/>
            <person name="Butcher S.J."/>
        </authorList>
    </citation>
    <scope>STRUCTURE BY ELECTRON MICROSCOPY (14.0 ANGSTROMS)</scope>
    <scope>FUNCTION</scope>
</reference>
<accession>P07579</accession>
<organism>
    <name type="scientific">Pseudomonas phage phi6</name>
    <name type="common">Bacteriophage phi-6</name>
    <dbReference type="NCBI Taxonomy" id="2928686"/>
    <lineage>
        <taxon>Viruses</taxon>
        <taxon>Riboviria</taxon>
        <taxon>Orthornavirae</taxon>
        <taxon>Duplornaviricota</taxon>
        <taxon>Vidaverviricetes</taxon>
        <taxon>Mindivirales</taxon>
        <taxon>Cystoviridae</taxon>
        <taxon>Cystovirus</taxon>
        <taxon>Cystovirus phi6</taxon>
    </lineage>
</organism>
<name>CAPSD_BPPH6</name>
<feature type="chain" id="PRO_0000164642" description="Major outer capsid protein">
    <location>
        <begin position="1"/>
        <end position="149"/>
    </location>
</feature>
<feature type="helix" evidence="3">
    <location>
        <begin position="4"/>
        <end position="20"/>
    </location>
</feature>
<feature type="helix" evidence="3">
    <location>
        <begin position="23"/>
        <end position="32"/>
    </location>
</feature>
<feature type="helix" evidence="3">
    <location>
        <begin position="38"/>
        <end position="47"/>
    </location>
</feature>
<feature type="helix" evidence="3">
    <location>
        <begin position="49"/>
        <end position="58"/>
    </location>
</feature>
<feature type="strand" evidence="3">
    <location>
        <begin position="61"/>
        <end position="63"/>
    </location>
</feature>
<feature type="helix" evidence="3">
    <location>
        <begin position="64"/>
        <end position="73"/>
    </location>
</feature>
<feature type="helix" evidence="3">
    <location>
        <begin position="78"/>
        <end position="84"/>
    </location>
</feature>
<feature type="helix" evidence="3">
    <location>
        <begin position="95"/>
        <end position="99"/>
    </location>
</feature>
<feature type="helix" evidence="3">
    <location>
        <begin position="100"/>
        <end position="102"/>
    </location>
</feature>
<feature type="helix" evidence="3">
    <location>
        <begin position="103"/>
        <end position="116"/>
    </location>
</feature>
<feature type="helix" evidence="3">
    <location>
        <begin position="119"/>
        <end position="130"/>
    </location>
</feature>
<feature type="helix" evidence="3">
    <location>
        <begin position="133"/>
        <end position="144"/>
    </location>
</feature>
<organismHost>
    <name type="scientific">Pseudomonas savastanoi pv. phaseolicola</name>
    <name type="common">Pseudomonas syringae pv. phaseolicola</name>
    <dbReference type="NCBI Taxonomy" id="319"/>
</organismHost>
<gene>
    <name type="primary">P8</name>
</gene>
<protein>
    <recommendedName>
        <fullName>Major outer capsid protein</fullName>
    </recommendedName>
    <alternativeName>
        <fullName>Protein P8</fullName>
    </alternativeName>
</protein>